<reference key="1">
    <citation type="journal article" date="2009" name="PLoS Genet.">
        <title>Organised genome dynamics in the Escherichia coli species results in highly diverse adaptive paths.</title>
        <authorList>
            <person name="Touchon M."/>
            <person name="Hoede C."/>
            <person name="Tenaillon O."/>
            <person name="Barbe V."/>
            <person name="Baeriswyl S."/>
            <person name="Bidet P."/>
            <person name="Bingen E."/>
            <person name="Bonacorsi S."/>
            <person name="Bouchier C."/>
            <person name="Bouvet O."/>
            <person name="Calteau A."/>
            <person name="Chiapello H."/>
            <person name="Clermont O."/>
            <person name="Cruveiller S."/>
            <person name="Danchin A."/>
            <person name="Diard M."/>
            <person name="Dossat C."/>
            <person name="Karoui M.E."/>
            <person name="Frapy E."/>
            <person name="Garry L."/>
            <person name="Ghigo J.M."/>
            <person name="Gilles A.M."/>
            <person name="Johnson J."/>
            <person name="Le Bouguenec C."/>
            <person name="Lescat M."/>
            <person name="Mangenot S."/>
            <person name="Martinez-Jehanne V."/>
            <person name="Matic I."/>
            <person name="Nassif X."/>
            <person name="Oztas S."/>
            <person name="Petit M.A."/>
            <person name="Pichon C."/>
            <person name="Rouy Z."/>
            <person name="Ruf C.S."/>
            <person name="Schneider D."/>
            <person name="Tourret J."/>
            <person name="Vacherie B."/>
            <person name="Vallenet D."/>
            <person name="Medigue C."/>
            <person name="Rocha E.P.C."/>
            <person name="Denamur E."/>
        </authorList>
    </citation>
    <scope>NUCLEOTIDE SEQUENCE [LARGE SCALE GENOMIC DNA]</scope>
    <source>
        <strain>IAI1</strain>
    </source>
</reference>
<sequence>MTIWVDADACPNVIKEILYRAAERMQMPLVLVANQSLRVPPSRFIRTLRVAAGFDVADNEIVRQCEAGDLVITADIPLAAEAIEKGAAALNPRGERYTPATIRERLTMRDFMDTLRASGIQTGGPDSLSQRDRQAFAAELEKWWLEVQRSRG</sequence>
<gene>
    <name evidence="1" type="primary">yaiI</name>
    <name type="ordered locus">ECIAI1_0387</name>
</gene>
<accession>B7M332</accession>
<evidence type="ECO:0000255" key="1">
    <source>
        <dbReference type="HAMAP-Rule" id="MF_00489"/>
    </source>
</evidence>
<organism>
    <name type="scientific">Escherichia coli O8 (strain IAI1)</name>
    <dbReference type="NCBI Taxonomy" id="585034"/>
    <lineage>
        <taxon>Bacteria</taxon>
        <taxon>Pseudomonadati</taxon>
        <taxon>Pseudomonadota</taxon>
        <taxon>Gammaproteobacteria</taxon>
        <taxon>Enterobacterales</taxon>
        <taxon>Enterobacteriaceae</taxon>
        <taxon>Escherichia</taxon>
    </lineage>
</organism>
<feature type="chain" id="PRO_1000126187" description="UPF0178 protein YaiI">
    <location>
        <begin position="1"/>
        <end position="152"/>
    </location>
</feature>
<comment type="similarity">
    <text evidence="1">Belongs to the UPF0178 family.</text>
</comment>
<proteinExistence type="inferred from homology"/>
<protein>
    <recommendedName>
        <fullName evidence="1">UPF0178 protein YaiI</fullName>
    </recommendedName>
</protein>
<dbReference type="EMBL" id="CU928160">
    <property type="protein sequence ID" value="CAQ97259.1"/>
    <property type="molecule type" value="Genomic_DNA"/>
</dbReference>
<dbReference type="RefSeq" id="WP_000158159.1">
    <property type="nucleotide sequence ID" value="NC_011741.1"/>
</dbReference>
<dbReference type="KEGG" id="ecr:ECIAI1_0387"/>
<dbReference type="HOGENOM" id="CLU_106619_2_1_6"/>
<dbReference type="CDD" id="cd18720">
    <property type="entry name" value="PIN_YqxD-like"/>
    <property type="match status" value="1"/>
</dbReference>
<dbReference type="HAMAP" id="MF_00489">
    <property type="entry name" value="UPF0178"/>
    <property type="match status" value="1"/>
</dbReference>
<dbReference type="InterPro" id="IPR003791">
    <property type="entry name" value="UPF0178"/>
</dbReference>
<dbReference type="NCBIfam" id="NF001095">
    <property type="entry name" value="PRK00124.1"/>
    <property type="match status" value="1"/>
</dbReference>
<dbReference type="PANTHER" id="PTHR35146">
    <property type="entry name" value="UPF0178 PROTEIN YAII"/>
    <property type="match status" value="1"/>
</dbReference>
<dbReference type="PANTHER" id="PTHR35146:SF1">
    <property type="entry name" value="UPF0178 PROTEIN YAII"/>
    <property type="match status" value="1"/>
</dbReference>
<dbReference type="Pfam" id="PF02639">
    <property type="entry name" value="DUF188"/>
    <property type="match status" value="1"/>
</dbReference>
<name>YAII_ECO8A</name>